<gene>
    <name evidence="1" type="primary">guaC</name>
    <name type="ordered locus">KPN78578_01060</name>
    <name type="ORF">KPN_00107</name>
</gene>
<reference key="1">
    <citation type="submission" date="2006-09" db="EMBL/GenBank/DDBJ databases">
        <authorList>
            <consortium name="The Klebsiella pneumonia Genome Sequencing Project"/>
            <person name="McClelland M."/>
            <person name="Sanderson E.K."/>
            <person name="Spieth J."/>
            <person name="Clifton W.S."/>
            <person name="Latreille P."/>
            <person name="Sabo A."/>
            <person name="Pepin K."/>
            <person name="Bhonagiri V."/>
            <person name="Porwollik S."/>
            <person name="Ali J."/>
            <person name="Wilson R.K."/>
        </authorList>
    </citation>
    <scope>NUCLEOTIDE SEQUENCE [LARGE SCALE GENOMIC DNA]</scope>
    <source>
        <strain>ATCC 700721 / MGH 78578</strain>
    </source>
</reference>
<sequence>MRIEEDLKLGFKDVLIRPKRSTLKSRSDVELEREFTFKHSGLTWSGVPIIAANMDTVGTFSMAKALATFGILTAVHKHYTAEEWLAFTQGASADVLKHVMVSTGTSDADFEKTQQILSQNPQLNFVCIDVANGYSEHFVQFVAKAREAWPQKTIIAGNVVTGEMCEELILSGADIVKVGIGPGSVCTTRVKTGVGYPQLSAVIECADAAHGLGGQIISDGGCTMPGDVAKAFGGGADFVMLGGMLAGHEESGGTIVEENGEKFMLFYGMSSESAMTRHVGGVAKYRAAEGKTVKLPLRGPVENTARDILGGLRSACTYVGASRLKELTKRTTFIRVQEQENRVFNSL</sequence>
<evidence type="ECO:0000255" key="1">
    <source>
        <dbReference type="HAMAP-Rule" id="MF_00596"/>
    </source>
</evidence>
<accession>A6T4P6</accession>
<feature type="chain" id="PRO_1000025614" description="GMP reductase">
    <location>
        <begin position="1"/>
        <end position="347"/>
    </location>
</feature>
<feature type="active site" description="Thioimidate intermediate" evidence="1">
    <location>
        <position position="186"/>
    </location>
</feature>
<feature type="binding site" evidence="1">
    <location>
        <begin position="108"/>
        <end position="131"/>
    </location>
    <ligand>
        <name>NADP(+)</name>
        <dbReference type="ChEBI" id="CHEBI:58349"/>
    </ligand>
</feature>
<feature type="binding site" evidence="1">
    <location>
        <position position="181"/>
    </location>
    <ligand>
        <name>K(+)</name>
        <dbReference type="ChEBI" id="CHEBI:29103"/>
    </ligand>
</feature>
<feature type="binding site" evidence="1">
    <location>
        <position position="183"/>
    </location>
    <ligand>
        <name>K(+)</name>
        <dbReference type="ChEBI" id="CHEBI:29103"/>
    </ligand>
</feature>
<feature type="binding site" evidence="1">
    <location>
        <begin position="216"/>
        <end position="239"/>
    </location>
    <ligand>
        <name>NADP(+)</name>
        <dbReference type="ChEBI" id="CHEBI:58349"/>
    </ligand>
</feature>
<organism>
    <name type="scientific">Klebsiella pneumoniae subsp. pneumoniae (strain ATCC 700721 / MGH 78578)</name>
    <dbReference type="NCBI Taxonomy" id="272620"/>
    <lineage>
        <taxon>Bacteria</taxon>
        <taxon>Pseudomonadati</taxon>
        <taxon>Pseudomonadota</taxon>
        <taxon>Gammaproteobacteria</taxon>
        <taxon>Enterobacterales</taxon>
        <taxon>Enterobacteriaceae</taxon>
        <taxon>Klebsiella/Raoultella group</taxon>
        <taxon>Klebsiella</taxon>
        <taxon>Klebsiella pneumoniae complex</taxon>
    </lineage>
</organism>
<keyword id="KW-0479">Metal-binding</keyword>
<keyword id="KW-0521">NADP</keyword>
<keyword id="KW-0560">Oxidoreductase</keyword>
<keyword id="KW-0630">Potassium</keyword>
<proteinExistence type="inferred from homology"/>
<comment type="function">
    <text evidence="1">Catalyzes the irreversible NADPH-dependent deamination of GMP to IMP. It functions in the conversion of nucleobase, nucleoside and nucleotide derivatives of G to A nucleotides, and in maintaining the intracellular balance of A and G nucleotides.</text>
</comment>
<comment type="catalytic activity">
    <reaction evidence="1">
        <text>IMP + NH4(+) + NADP(+) = GMP + NADPH + 2 H(+)</text>
        <dbReference type="Rhea" id="RHEA:17185"/>
        <dbReference type="ChEBI" id="CHEBI:15378"/>
        <dbReference type="ChEBI" id="CHEBI:28938"/>
        <dbReference type="ChEBI" id="CHEBI:57783"/>
        <dbReference type="ChEBI" id="CHEBI:58053"/>
        <dbReference type="ChEBI" id="CHEBI:58115"/>
        <dbReference type="ChEBI" id="CHEBI:58349"/>
        <dbReference type="EC" id="1.7.1.7"/>
    </reaction>
</comment>
<comment type="subunit">
    <text evidence="1">Homotetramer.</text>
</comment>
<comment type="similarity">
    <text evidence="1">Belongs to the IMPDH/GMPR family. GuaC type 1 subfamily.</text>
</comment>
<dbReference type="EC" id="1.7.1.7" evidence="1"/>
<dbReference type="EMBL" id="CP000647">
    <property type="protein sequence ID" value="ABR75567.1"/>
    <property type="molecule type" value="Genomic_DNA"/>
</dbReference>
<dbReference type="RefSeq" id="WP_004145938.1">
    <property type="nucleotide sequence ID" value="NC_009648.1"/>
</dbReference>
<dbReference type="SMR" id="A6T4P6"/>
<dbReference type="STRING" id="272620.KPN_00107"/>
<dbReference type="jPOST" id="A6T4P6"/>
<dbReference type="PaxDb" id="272620-KPN_00107"/>
<dbReference type="EnsemblBacteria" id="ABR75567">
    <property type="protein sequence ID" value="ABR75567"/>
    <property type="gene ID" value="KPN_00107"/>
</dbReference>
<dbReference type="KEGG" id="kpn:KPN_00107"/>
<dbReference type="HOGENOM" id="CLU_022552_5_3_6"/>
<dbReference type="Proteomes" id="UP000000265">
    <property type="component" value="Chromosome"/>
</dbReference>
<dbReference type="GO" id="GO:0005829">
    <property type="term" value="C:cytosol"/>
    <property type="evidence" value="ECO:0007669"/>
    <property type="project" value="TreeGrafter"/>
</dbReference>
<dbReference type="GO" id="GO:1902560">
    <property type="term" value="C:GMP reductase complex"/>
    <property type="evidence" value="ECO:0007669"/>
    <property type="project" value="InterPro"/>
</dbReference>
<dbReference type="GO" id="GO:0003920">
    <property type="term" value="F:GMP reductase activity"/>
    <property type="evidence" value="ECO:0007669"/>
    <property type="project" value="UniProtKB-UniRule"/>
</dbReference>
<dbReference type="GO" id="GO:0046872">
    <property type="term" value="F:metal ion binding"/>
    <property type="evidence" value="ECO:0007669"/>
    <property type="project" value="UniProtKB-KW"/>
</dbReference>
<dbReference type="GO" id="GO:0006163">
    <property type="term" value="P:purine nucleotide metabolic process"/>
    <property type="evidence" value="ECO:0007669"/>
    <property type="project" value="UniProtKB-UniRule"/>
</dbReference>
<dbReference type="CDD" id="cd00381">
    <property type="entry name" value="IMPDH"/>
    <property type="match status" value="1"/>
</dbReference>
<dbReference type="FunFam" id="3.20.20.70:FF:000012">
    <property type="entry name" value="GMP reductase"/>
    <property type="match status" value="1"/>
</dbReference>
<dbReference type="Gene3D" id="3.20.20.70">
    <property type="entry name" value="Aldolase class I"/>
    <property type="match status" value="1"/>
</dbReference>
<dbReference type="HAMAP" id="MF_00596">
    <property type="entry name" value="GMP_reduct_type1"/>
    <property type="match status" value="1"/>
</dbReference>
<dbReference type="InterPro" id="IPR013785">
    <property type="entry name" value="Aldolase_TIM"/>
</dbReference>
<dbReference type="InterPro" id="IPR050139">
    <property type="entry name" value="GMP_reductase"/>
</dbReference>
<dbReference type="InterPro" id="IPR005993">
    <property type="entry name" value="GMPR"/>
</dbReference>
<dbReference type="InterPro" id="IPR015875">
    <property type="entry name" value="IMP_DH/GMP_Rdtase_CS"/>
</dbReference>
<dbReference type="InterPro" id="IPR001093">
    <property type="entry name" value="IMP_DH_GMPRt"/>
</dbReference>
<dbReference type="NCBIfam" id="TIGR01305">
    <property type="entry name" value="GMP_reduct_1"/>
    <property type="match status" value="1"/>
</dbReference>
<dbReference type="NCBIfam" id="NF003470">
    <property type="entry name" value="PRK05096.1"/>
    <property type="match status" value="1"/>
</dbReference>
<dbReference type="PANTHER" id="PTHR43170">
    <property type="entry name" value="GMP REDUCTASE"/>
    <property type="match status" value="1"/>
</dbReference>
<dbReference type="PANTHER" id="PTHR43170:SF5">
    <property type="entry name" value="GMP REDUCTASE"/>
    <property type="match status" value="1"/>
</dbReference>
<dbReference type="Pfam" id="PF00478">
    <property type="entry name" value="IMPDH"/>
    <property type="match status" value="1"/>
</dbReference>
<dbReference type="PIRSF" id="PIRSF000235">
    <property type="entry name" value="GMP_reductase"/>
    <property type="match status" value="1"/>
</dbReference>
<dbReference type="SMART" id="SM01240">
    <property type="entry name" value="IMPDH"/>
    <property type="match status" value="1"/>
</dbReference>
<dbReference type="SUPFAM" id="SSF51412">
    <property type="entry name" value="Inosine monophosphate dehydrogenase (IMPDH)"/>
    <property type="match status" value="1"/>
</dbReference>
<dbReference type="PROSITE" id="PS00487">
    <property type="entry name" value="IMP_DH_GMP_RED"/>
    <property type="match status" value="1"/>
</dbReference>
<name>GUAC_KLEP7</name>
<protein>
    <recommendedName>
        <fullName evidence="1">GMP reductase</fullName>
        <ecNumber evidence="1">1.7.1.7</ecNumber>
    </recommendedName>
    <alternativeName>
        <fullName evidence="1">Guanosine 5'-monophosphate oxidoreductase</fullName>
        <shortName evidence="1">Guanosine monophosphate reductase</shortName>
    </alternativeName>
</protein>